<accession>A2Q8B5</accession>
<dbReference type="EC" id="1.1.1.307"/>
<dbReference type="EMBL" id="AM269959">
    <property type="protein sequence ID" value="CAK36912.1"/>
    <property type="molecule type" value="Genomic_DNA"/>
</dbReference>
<dbReference type="RefSeq" id="XP_001388804.2">
    <property type="nucleotide sequence ID" value="XM_001388767.2"/>
</dbReference>
<dbReference type="SMR" id="A2Q8B5"/>
<dbReference type="GlyCosmos" id="A2Q8B5">
    <property type="glycosylation" value="3 sites, No reported glycans"/>
</dbReference>
<dbReference type="EnsemblFungi" id="CAK36912">
    <property type="protein sequence ID" value="CAK36912"/>
    <property type="gene ID" value="An01g03740"/>
</dbReference>
<dbReference type="GeneID" id="4977114"/>
<dbReference type="KEGG" id="ang:An01g03740"/>
<dbReference type="VEuPathDB" id="FungiDB:An01g03740"/>
<dbReference type="HOGENOM" id="CLU_023205_0_0_1"/>
<dbReference type="BioCyc" id="MetaCyc:MONOMER-13190"/>
<dbReference type="UniPathway" id="UPA00810"/>
<dbReference type="Proteomes" id="UP000006706">
    <property type="component" value="Chromosome 2R"/>
</dbReference>
<dbReference type="GO" id="GO:0032866">
    <property type="term" value="F:D-xylose reductase (NADPH) activity"/>
    <property type="evidence" value="ECO:0000315"/>
    <property type="project" value="AspGD"/>
</dbReference>
<dbReference type="GO" id="GO:0019568">
    <property type="term" value="P:arabinose catabolic process"/>
    <property type="evidence" value="ECO:0000315"/>
    <property type="project" value="AspGD"/>
</dbReference>
<dbReference type="GO" id="GO:0042843">
    <property type="term" value="P:D-xylose catabolic process"/>
    <property type="evidence" value="ECO:0000315"/>
    <property type="project" value="AspGD"/>
</dbReference>
<dbReference type="CDD" id="cd19115">
    <property type="entry name" value="AKR_AKR2D1"/>
    <property type="match status" value="1"/>
</dbReference>
<dbReference type="FunFam" id="3.20.20.100:FF:000007">
    <property type="entry name" value="NAD(P)H-dependent D-xylose reductase xyl1"/>
    <property type="match status" value="1"/>
</dbReference>
<dbReference type="Gene3D" id="3.20.20.100">
    <property type="entry name" value="NADP-dependent oxidoreductase domain"/>
    <property type="match status" value="1"/>
</dbReference>
<dbReference type="InterPro" id="IPR020471">
    <property type="entry name" value="AKR"/>
</dbReference>
<dbReference type="InterPro" id="IPR044487">
    <property type="entry name" value="AKR2D"/>
</dbReference>
<dbReference type="InterPro" id="IPR018170">
    <property type="entry name" value="Aldo/ket_reductase_CS"/>
</dbReference>
<dbReference type="InterPro" id="IPR023210">
    <property type="entry name" value="NADP_OxRdtase_dom"/>
</dbReference>
<dbReference type="InterPro" id="IPR036812">
    <property type="entry name" value="NADP_OxRdtase_dom_sf"/>
</dbReference>
<dbReference type="PANTHER" id="PTHR11732">
    <property type="entry name" value="ALDO/KETO REDUCTASE"/>
    <property type="match status" value="1"/>
</dbReference>
<dbReference type="Pfam" id="PF00248">
    <property type="entry name" value="Aldo_ket_red"/>
    <property type="match status" value="1"/>
</dbReference>
<dbReference type="PIRSF" id="PIRSF000097">
    <property type="entry name" value="AKR"/>
    <property type="match status" value="1"/>
</dbReference>
<dbReference type="PRINTS" id="PR00069">
    <property type="entry name" value="ALDKETRDTASE"/>
</dbReference>
<dbReference type="SUPFAM" id="SSF51430">
    <property type="entry name" value="NAD(P)-linked oxidoreductase"/>
    <property type="match status" value="1"/>
</dbReference>
<dbReference type="PROSITE" id="PS00798">
    <property type="entry name" value="ALDOKETO_REDUCTASE_1"/>
    <property type="match status" value="1"/>
</dbReference>
<dbReference type="PROSITE" id="PS00062">
    <property type="entry name" value="ALDOKETO_REDUCTASE_2"/>
    <property type="match status" value="1"/>
</dbReference>
<dbReference type="PROSITE" id="PS00063">
    <property type="entry name" value="ALDOKETO_REDUCTASE_3"/>
    <property type="match status" value="1"/>
</dbReference>
<reference key="1">
    <citation type="journal article" date="2007" name="Nat. Biotechnol.">
        <title>Genome sequencing and analysis of the versatile cell factory Aspergillus niger CBS 513.88.</title>
        <authorList>
            <person name="Pel H.J."/>
            <person name="de Winde J.H."/>
            <person name="Archer D.B."/>
            <person name="Dyer P.S."/>
            <person name="Hofmann G."/>
            <person name="Schaap P.J."/>
            <person name="Turner G."/>
            <person name="de Vries R.P."/>
            <person name="Albang R."/>
            <person name="Albermann K."/>
            <person name="Andersen M.R."/>
            <person name="Bendtsen J.D."/>
            <person name="Benen J.A.E."/>
            <person name="van den Berg M."/>
            <person name="Breestraat S."/>
            <person name="Caddick M.X."/>
            <person name="Contreras R."/>
            <person name="Cornell M."/>
            <person name="Coutinho P.M."/>
            <person name="Danchin E.G.J."/>
            <person name="Debets A.J.M."/>
            <person name="Dekker P."/>
            <person name="van Dijck P.W.M."/>
            <person name="van Dijk A."/>
            <person name="Dijkhuizen L."/>
            <person name="Driessen A.J.M."/>
            <person name="d'Enfert C."/>
            <person name="Geysens S."/>
            <person name="Goosen C."/>
            <person name="Groot G.S.P."/>
            <person name="de Groot P.W.J."/>
            <person name="Guillemette T."/>
            <person name="Henrissat B."/>
            <person name="Herweijer M."/>
            <person name="van den Hombergh J.P.T.W."/>
            <person name="van den Hondel C.A.M.J.J."/>
            <person name="van der Heijden R.T.J.M."/>
            <person name="van der Kaaij R.M."/>
            <person name="Klis F.M."/>
            <person name="Kools H.J."/>
            <person name="Kubicek C.P."/>
            <person name="van Kuyk P.A."/>
            <person name="Lauber J."/>
            <person name="Lu X."/>
            <person name="van der Maarel M.J.E.C."/>
            <person name="Meulenberg R."/>
            <person name="Menke H."/>
            <person name="Mortimer M.A."/>
            <person name="Nielsen J."/>
            <person name="Oliver S.G."/>
            <person name="Olsthoorn M."/>
            <person name="Pal K."/>
            <person name="van Peij N.N.M.E."/>
            <person name="Ram A.F.J."/>
            <person name="Rinas U."/>
            <person name="Roubos J.A."/>
            <person name="Sagt C.M.J."/>
            <person name="Schmoll M."/>
            <person name="Sun J."/>
            <person name="Ussery D."/>
            <person name="Varga J."/>
            <person name="Vervecken W."/>
            <person name="van de Vondervoort P.J.J."/>
            <person name="Wedler H."/>
            <person name="Woesten H.A.B."/>
            <person name="Zeng A.-P."/>
            <person name="van Ooyen A.J.J."/>
            <person name="Visser J."/>
            <person name="Stam H."/>
        </authorList>
    </citation>
    <scope>NUCLEOTIDE SEQUENCE [LARGE SCALE GENOMIC DNA]</scope>
    <source>
        <strain>ATCC MYA-4892 / CBS 513.88 / FGSC A1513</strain>
    </source>
</reference>
<keyword id="KW-0119">Carbohydrate metabolism</keyword>
<keyword id="KW-0325">Glycoprotein</keyword>
<keyword id="KW-0520">NAD</keyword>
<keyword id="KW-0521">NADP</keyword>
<keyword id="KW-0560">Oxidoreductase</keyword>
<keyword id="KW-1185">Reference proteome</keyword>
<keyword id="KW-0859">Xylose metabolism</keyword>
<organism>
    <name type="scientific">Aspergillus niger (strain ATCC MYA-4892 / CBS 513.88 / FGSC A1513)</name>
    <dbReference type="NCBI Taxonomy" id="425011"/>
    <lineage>
        <taxon>Eukaryota</taxon>
        <taxon>Fungi</taxon>
        <taxon>Dikarya</taxon>
        <taxon>Ascomycota</taxon>
        <taxon>Pezizomycotina</taxon>
        <taxon>Eurotiomycetes</taxon>
        <taxon>Eurotiomycetidae</taxon>
        <taxon>Eurotiales</taxon>
        <taxon>Aspergillaceae</taxon>
        <taxon>Aspergillus</taxon>
        <taxon>Aspergillus subgen. Circumdati</taxon>
    </lineage>
</organism>
<protein>
    <recommendedName>
        <fullName>Probable NAD(P)H-dependent D-xylose reductase xyl1</fullName>
        <shortName>XR</shortName>
        <ecNumber>1.1.1.307</ecNumber>
    </recommendedName>
</protein>
<name>XYL1_ASPNC</name>
<proteinExistence type="inferred from homology"/>
<feature type="chain" id="PRO_0000393500" description="Probable NAD(P)H-dependent D-xylose reductase xyl1">
    <location>
        <begin position="1"/>
        <end position="319"/>
    </location>
</feature>
<feature type="active site" description="Proton donor" evidence="1">
    <location>
        <position position="50"/>
    </location>
</feature>
<feature type="binding site" evidence="1">
    <location>
        <position position="112"/>
    </location>
    <ligand>
        <name>substrate</name>
    </ligand>
</feature>
<feature type="binding site" evidence="1">
    <location>
        <begin position="166"/>
        <end position="167"/>
    </location>
    <ligand>
        <name>NAD(+)</name>
        <dbReference type="ChEBI" id="CHEBI:57540"/>
    </ligand>
</feature>
<feature type="binding site" evidence="1">
    <location>
        <begin position="215"/>
        <end position="224"/>
    </location>
    <ligand>
        <name>NAD(+)</name>
        <dbReference type="ChEBI" id="CHEBI:57540"/>
    </ligand>
</feature>
<feature type="binding site" evidence="1">
    <location>
        <begin position="271"/>
        <end position="281"/>
    </location>
    <ligand>
        <name>NAD(+)</name>
        <dbReference type="ChEBI" id="CHEBI:57540"/>
    </ligand>
</feature>
<feature type="site" description="Lowers pKa of active site Tyr" evidence="1">
    <location>
        <position position="79"/>
    </location>
</feature>
<feature type="glycosylation site" description="N-linked (GlcNAc...) asparagine" evidence="2">
    <location>
        <position position="26"/>
    </location>
</feature>
<feature type="glycosylation site" description="N-linked (GlcNAc...) asparagine" evidence="2">
    <location>
        <position position="141"/>
    </location>
</feature>
<feature type="glycosylation site" description="N-linked (GlcNAc...) asparagine" evidence="2">
    <location>
        <position position="167"/>
    </location>
</feature>
<gene>
    <name type="primary">xyl1</name>
    <name type="synonym">xyrA</name>
    <name type="ORF">An01g03740</name>
</gene>
<comment type="function">
    <text evidence="1">Catalyzes the initial reaction in the xylose utilization pathway by reducing D-xylose into xylitol. Xylose is a major component of hemicelluloses such as xylan. Most fungi utilize D-xylose via three enzymatic reactions, xylose reductase (XR), xylitol dehydrogenase (XDH), and xylulokinase, to form xylulose 5-phosphate, which enters pentose phosphate pathway (By similarity).</text>
</comment>
<comment type="catalytic activity">
    <reaction>
        <text>xylitol + NAD(+) = D-xylose + NADH + H(+)</text>
        <dbReference type="Rhea" id="RHEA:27441"/>
        <dbReference type="ChEBI" id="CHEBI:15378"/>
        <dbReference type="ChEBI" id="CHEBI:17151"/>
        <dbReference type="ChEBI" id="CHEBI:53455"/>
        <dbReference type="ChEBI" id="CHEBI:57540"/>
        <dbReference type="ChEBI" id="CHEBI:57945"/>
        <dbReference type="EC" id="1.1.1.307"/>
    </reaction>
</comment>
<comment type="catalytic activity">
    <reaction>
        <text>xylitol + NADP(+) = D-xylose + NADPH + H(+)</text>
        <dbReference type="Rhea" id="RHEA:27445"/>
        <dbReference type="ChEBI" id="CHEBI:15378"/>
        <dbReference type="ChEBI" id="CHEBI:17151"/>
        <dbReference type="ChEBI" id="CHEBI:53455"/>
        <dbReference type="ChEBI" id="CHEBI:57783"/>
        <dbReference type="ChEBI" id="CHEBI:58349"/>
        <dbReference type="EC" id="1.1.1.307"/>
    </reaction>
</comment>
<comment type="pathway">
    <text>Carbohydrate metabolism; D-xylose degradation.</text>
</comment>
<comment type="similarity">
    <text evidence="3">Belongs to the aldo/keto reductase family.</text>
</comment>
<sequence length="319" mass="36095">MASPTVKLNSGYDMPLVGFGLWKVNNDTCADQIYHAIKEGYRLFDGACDYGNEVEAGQGIARAIKDGLVKREELFIVSKLWNSFHDGDRVEPICRKQLADWGIDYFDLYIVHFPISLKYVDPAVRYPPGWKSEKDELEFGNATIQETWTAMESLVDKKLARSIGISNFSAQLVMDLLRYARIRPATLQIEHHPYLTQTRLVEYAQKEGLTVTAYSSFGPLSFLELSVQNAVDSPPLFEHQLVKSIAEKHGRTPAQVLLRWATQRGIAVIPKSNNPQRLKQNLDVTGWNLEEEEIKAISGLDRGLRFNDPLGYGLYAPIF</sequence>
<evidence type="ECO:0000250" key="1"/>
<evidence type="ECO:0000255" key="2"/>
<evidence type="ECO:0000305" key="3"/>